<gene>
    <name type="ordered locus">YOL153C</name>
    <name type="ORF">O0435/O0437/O0440</name>
</gene>
<accession>P0C155</accession>
<comment type="cofactor">
    <cofactor evidence="1">
        <name>Zn(2+)</name>
        <dbReference type="ChEBI" id="CHEBI:29105"/>
    </cofactor>
    <text evidence="1">Binds 2 Zn(2+) ions per subunit.</text>
</comment>
<comment type="subcellular location">
    <subcellularLocation>
        <location evidence="4">Membrane</location>
        <topology evidence="4">Single-pass type II membrane protein</topology>
    </subcellularLocation>
</comment>
<comment type="similarity">
    <text evidence="4">Belongs to the peptidase M20A family.</text>
</comment>
<comment type="caution">
    <text evidence="5 6">Could be the product of a pseudogene unlikely to encode a functional protein. Strain S288c has two stop codons in position 132 and 432, which disrupt the gene coding for this protein and produce three ORFs. Because of that it is not part of the S.cerevisiae S288c complete/reference proteome set.</text>
</comment>
<comment type="sequence caution" evidence="4">
    <conflict type="erroneous termination">
        <sequence resource="EMBL" id="X89715"/>
    </conflict>
    <text>Truncated C-terminus.</text>
</comment>
<comment type="sequence caution" evidence="4">
    <conflict type="erroneous termination">
        <sequence resource="EMBL" id="Z74895"/>
    </conflict>
    <text>Truncated C-terminus.</text>
</comment>
<sequence>MTETHHAPLPDVYPSSKQPTSSTYSKCKKFGLPLIGLLTLLLAYISSFTKPVPNSTFDVPASPQCKKPQVYRPSFNKSVNLILNDKQFKIDSIRKLSGAIQIPTEISDTNPLPNDDPEYYSEFFKLHKYFEETFPLVHSHLKVEKVNQLGLLYTWEGTDPSLKPILFMAHQDVVPVNREIWDSWQYPPLSGHYDQETDYVWGRGSNDCKNLMLAELEGIEQLLADGYQTERTVILSLGFDEESSGFMGAKVLAPFLLERYGPDSMFSIIDEGAGLLRLDKNLYIAAAVNAEKGYVDVRISIHGHGGHSSVQPDHTTIGVASELIYMMENHPFDYNFSLDNPIYDVLQCAAEHSGFLPPHVREAILKAPVDEGKRKVLTEFAASHPDIRDLIRTTRAVDVINGGVKANALPGLTSFIVNHRVDIHSSVNETVENDLYWARVIAEKHGYGLTFHDEIIIPETKLGHISLASEKMLEPAPVSPTSGHVWEIFAGTVQNLFQNEILAEQKDADVYVTGGLFSGNTDTKYYWGLSKNIYRFVAGIFPFDQLRTIHSVNEHISASSHVSAVAFVYEYIVNVNEYGHD</sequence>
<dbReference type="EC" id="3.4.17.-"/>
<dbReference type="EMBL" id="X89715">
    <property type="status" value="NOT_ANNOTATED_CDS"/>
    <property type="molecule type" value="Genomic_DNA"/>
</dbReference>
<dbReference type="EMBL" id="Z74895">
    <property type="status" value="NOT_ANNOTATED_CDS"/>
    <property type="molecule type" value="Genomic_DNA"/>
</dbReference>
<dbReference type="AGR" id="SGD:S000005513"/>
<dbReference type="SGD" id="S000005513">
    <property type="gene designation" value="YOL153C"/>
</dbReference>
<dbReference type="GO" id="GO:0016020">
    <property type="term" value="C:membrane"/>
    <property type="evidence" value="ECO:0007669"/>
    <property type="project" value="UniProtKB-SubCell"/>
</dbReference>
<dbReference type="GO" id="GO:0046872">
    <property type="term" value="F:metal ion binding"/>
    <property type="evidence" value="ECO:0007669"/>
    <property type="project" value="UniProtKB-KW"/>
</dbReference>
<dbReference type="GO" id="GO:0004181">
    <property type="term" value="F:metallocarboxypeptidase activity"/>
    <property type="evidence" value="ECO:0007669"/>
    <property type="project" value="InterPro"/>
</dbReference>
<dbReference type="GO" id="GO:0006508">
    <property type="term" value="P:proteolysis"/>
    <property type="evidence" value="ECO:0007669"/>
    <property type="project" value="UniProtKB-KW"/>
</dbReference>
<dbReference type="CDD" id="cd05674">
    <property type="entry name" value="M20_yscS"/>
    <property type="match status" value="1"/>
</dbReference>
<dbReference type="FunFam" id="3.40.630.10:FF:000098">
    <property type="entry name" value="Gly-Xaa carboxypeptidase"/>
    <property type="match status" value="1"/>
</dbReference>
<dbReference type="Gene3D" id="1.10.150.900">
    <property type="match status" value="1"/>
</dbReference>
<dbReference type="Gene3D" id="3.30.70.360">
    <property type="match status" value="1"/>
</dbReference>
<dbReference type="Gene3D" id="3.40.630.10">
    <property type="entry name" value="Zn peptidases"/>
    <property type="match status" value="1"/>
</dbReference>
<dbReference type="InterPro" id="IPR001261">
    <property type="entry name" value="ArgE/DapE_CS"/>
</dbReference>
<dbReference type="InterPro" id="IPR036264">
    <property type="entry name" value="Bact_exopeptidase_dim_dom"/>
</dbReference>
<dbReference type="InterPro" id="IPR017141">
    <property type="entry name" value="Pept_M20_carboxypep"/>
</dbReference>
<dbReference type="InterPro" id="IPR047177">
    <property type="entry name" value="Pept_M20A"/>
</dbReference>
<dbReference type="InterPro" id="IPR002933">
    <property type="entry name" value="Peptidase_M20"/>
</dbReference>
<dbReference type="InterPro" id="IPR011650">
    <property type="entry name" value="Peptidase_M20_dimer"/>
</dbReference>
<dbReference type="PANTHER" id="PTHR45962">
    <property type="entry name" value="N-FATTY-ACYL-AMINO ACID SYNTHASE/HYDROLASE PM20D1"/>
    <property type="match status" value="1"/>
</dbReference>
<dbReference type="PANTHER" id="PTHR45962:SF1">
    <property type="entry name" value="N-FATTY-ACYL-AMINO ACID SYNTHASE_HYDROLASE PM20D1"/>
    <property type="match status" value="1"/>
</dbReference>
<dbReference type="Pfam" id="PF07687">
    <property type="entry name" value="M20_dimer"/>
    <property type="match status" value="1"/>
</dbReference>
<dbReference type="Pfam" id="PF01546">
    <property type="entry name" value="Peptidase_M20"/>
    <property type="match status" value="1"/>
</dbReference>
<dbReference type="PIRSF" id="PIRSF037217">
    <property type="entry name" value="Carboxypeptidase_S"/>
    <property type="match status" value="1"/>
</dbReference>
<dbReference type="SUPFAM" id="SSF55031">
    <property type="entry name" value="Bacterial exopeptidase dimerisation domain"/>
    <property type="match status" value="1"/>
</dbReference>
<dbReference type="SUPFAM" id="SSF53187">
    <property type="entry name" value="Zn-dependent exopeptidases"/>
    <property type="match status" value="1"/>
</dbReference>
<dbReference type="PROSITE" id="PS00758">
    <property type="entry name" value="ARGE_DAPE_CPG2_1"/>
    <property type="match status" value="1"/>
</dbReference>
<dbReference type="PROSITE" id="PS00759">
    <property type="entry name" value="ARGE_DAPE_CPG2_2"/>
    <property type="match status" value="1"/>
</dbReference>
<evidence type="ECO:0000250" key="1"/>
<evidence type="ECO:0000250" key="2">
    <source>
        <dbReference type="UniProtKB" id="P27614"/>
    </source>
</evidence>
<evidence type="ECO:0000255" key="3"/>
<evidence type="ECO:0000305" key="4"/>
<evidence type="ECO:0000305" key="5">
    <source>
    </source>
</evidence>
<evidence type="ECO:0000305" key="6">
    <source>
    </source>
</evidence>
<keyword id="KW-0121">Carboxypeptidase</keyword>
<keyword id="KW-0325">Glycoprotein</keyword>
<keyword id="KW-0378">Hydrolase</keyword>
<keyword id="KW-1017">Isopeptide bond</keyword>
<keyword id="KW-0472">Membrane</keyword>
<keyword id="KW-0479">Metal-binding</keyword>
<keyword id="KW-0645">Protease</keyword>
<keyword id="KW-0735">Signal-anchor</keyword>
<keyword id="KW-0812">Transmembrane</keyword>
<keyword id="KW-1133">Transmembrane helix</keyword>
<keyword id="KW-0832">Ubl conjugation</keyword>
<keyword id="KW-0862">Zinc</keyword>
<protein>
    <recommendedName>
        <fullName>Putative carboxypeptidase YOL153C</fullName>
        <ecNumber>3.4.17.-</ecNumber>
    </recommendedName>
</protein>
<name>CBPS2_YEAST</name>
<proteinExistence type="uncertain"/>
<reference key="1">
    <citation type="journal article" date="1996" name="Yeast">
        <title>Analysis of the DNA sequence of a 15,500 bp fragment near the left telomere of chromosome XV from Saccharomyces cerevisiae reveals a putative sugar transporter, a carboxypeptidase homologue and two new open reading frames.</title>
        <authorList>
            <person name="Gamo F.-J."/>
            <person name="Lafuente M.J."/>
            <person name="Casamayor A."/>
            <person name="Arino J."/>
            <person name="Aldea M."/>
            <person name="Casas C."/>
            <person name="Herrero E."/>
            <person name="Gancedo C."/>
        </authorList>
    </citation>
    <scope>NUCLEOTIDE SEQUENCE [GENOMIC DNA]</scope>
    <scope>IDENTIFICATION OF GLU-132 AND GLU-432 IN STRAIN W303-1A</scope>
    <source>
        <strain>ATCC 208353 / W303-1A</strain>
        <strain>ATCC 96604 / S288c / FY1679</strain>
    </source>
</reference>
<reference key="2">
    <citation type="journal article" date="1997" name="Nature">
        <title>The nucleotide sequence of Saccharomyces cerevisiae chromosome XV.</title>
        <authorList>
            <person name="Dujon B."/>
            <person name="Albermann K."/>
            <person name="Aldea M."/>
            <person name="Alexandraki D."/>
            <person name="Ansorge W."/>
            <person name="Arino J."/>
            <person name="Benes V."/>
            <person name="Bohn C."/>
            <person name="Bolotin-Fukuhara M."/>
            <person name="Bordonne R."/>
            <person name="Boyer J."/>
            <person name="Camasses A."/>
            <person name="Casamayor A."/>
            <person name="Casas C."/>
            <person name="Cheret G."/>
            <person name="Cziepluch C."/>
            <person name="Daignan-Fornier B."/>
            <person name="Dang V.-D."/>
            <person name="de Haan M."/>
            <person name="Delius H."/>
            <person name="Durand P."/>
            <person name="Fairhead C."/>
            <person name="Feldmann H."/>
            <person name="Gaillon L."/>
            <person name="Galisson F."/>
            <person name="Gamo F.-J."/>
            <person name="Gancedo C."/>
            <person name="Goffeau A."/>
            <person name="Goulding S.E."/>
            <person name="Grivell L.A."/>
            <person name="Habbig B."/>
            <person name="Hand N.J."/>
            <person name="Hani J."/>
            <person name="Hattenhorst U."/>
            <person name="Hebling U."/>
            <person name="Hernando Y."/>
            <person name="Herrero E."/>
            <person name="Heumann K."/>
            <person name="Hiesel R."/>
            <person name="Hilger F."/>
            <person name="Hofmann B."/>
            <person name="Hollenberg C.P."/>
            <person name="Hughes B."/>
            <person name="Jauniaux J.-C."/>
            <person name="Kalogeropoulos A."/>
            <person name="Katsoulou C."/>
            <person name="Kordes E."/>
            <person name="Lafuente M.J."/>
            <person name="Landt O."/>
            <person name="Louis E.J."/>
            <person name="Maarse A.C."/>
            <person name="Madania A."/>
            <person name="Mannhaupt G."/>
            <person name="Marck C."/>
            <person name="Martin R.P."/>
            <person name="Mewes H.-W."/>
            <person name="Michaux G."/>
            <person name="Paces V."/>
            <person name="Parle-McDermott A.G."/>
            <person name="Pearson B.M."/>
            <person name="Perrin A."/>
            <person name="Pettersson B."/>
            <person name="Poch O."/>
            <person name="Pohl T.M."/>
            <person name="Poirey R."/>
            <person name="Portetelle D."/>
            <person name="Pujol A."/>
            <person name="Purnelle B."/>
            <person name="Ramezani Rad M."/>
            <person name="Rechmann S."/>
            <person name="Schwager C."/>
            <person name="Schweizer M."/>
            <person name="Sor F."/>
            <person name="Sterky F."/>
            <person name="Tarassov I.A."/>
            <person name="Teodoru C."/>
            <person name="Tettelin H."/>
            <person name="Thierry A."/>
            <person name="Tobiasch E."/>
            <person name="Tzermia M."/>
            <person name="Uhlen M."/>
            <person name="Unseld M."/>
            <person name="Valens M."/>
            <person name="Vandenbol M."/>
            <person name="Vetter I."/>
            <person name="Vlcek C."/>
            <person name="Voet M."/>
            <person name="Volckaert G."/>
            <person name="Voss H."/>
            <person name="Wambutt R."/>
            <person name="Wedler H."/>
            <person name="Wiemann S."/>
            <person name="Winsor B."/>
            <person name="Wolfe K.H."/>
            <person name="Zollner A."/>
            <person name="Zumstein E."/>
            <person name="Kleine K."/>
        </authorList>
    </citation>
    <scope>NUCLEOTIDE SEQUENCE [LARGE SCALE GENOMIC DNA]</scope>
    <source>
        <strain>ATCC 204508 / S288c</strain>
    </source>
</reference>
<reference key="3">
    <citation type="journal article" date="2014" name="G3 (Bethesda)">
        <title>The reference genome sequence of Saccharomyces cerevisiae: Then and now.</title>
        <authorList>
            <person name="Engel S.R."/>
            <person name="Dietrich F.S."/>
            <person name="Fisk D.G."/>
            <person name="Binkley G."/>
            <person name="Balakrishnan R."/>
            <person name="Costanzo M.C."/>
            <person name="Dwight S.S."/>
            <person name="Hitz B.C."/>
            <person name="Karra K."/>
            <person name="Nash R.S."/>
            <person name="Weng S."/>
            <person name="Wong E.D."/>
            <person name="Lloyd P."/>
            <person name="Skrzypek M.S."/>
            <person name="Miyasato S.R."/>
            <person name="Simison M."/>
            <person name="Cherry J.M."/>
        </authorList>
    </citation>
    <scope>GENOME REANNOTATION</scope>
    <source>
        <strain>ATCC 204508 / S288c</strain>
    </source>
</reference>
<organism>
    <name type="scientific">Saccharomyces cerevisiae (strain ATCC 204508 / S288c)</name>
    <name type="common">Baker's yeast</name>
    <dbReference type="NCBI Taxonomy" id="559292"/>
    <lineage>
        <taxon>Eukaryota</taxon>
        <taxon>Fungi</taxon>
        <taxon>Dikarya</taxon>
        <taxon>Ascomycota</taxon>
        <taxon>Saccharomycotina</taxon>
        <taxon>Saccharomycetes</taxon>
        <taxon>Saccharomycetales</taxon>
        <taxon>Saccharomycetaceae</taxon>
        <taxon>Saccharomyces</taxon>
    </lineage>
</organism>
<feature type="chain" id="PRO_0000226147" description="Putative carboxypeptidase YOL153C">
    <location>
        <begin position="1"/>
        <end position="581"/>
    </location>
</feature>
<feature type="topological domain" description="Cytoplasmic" evidence="3">
    <location>
        <begin position="1"/>
        <end position="29"/>
    </location>
</feature>
<feature type="transmembrane region" description="Helical; Signal-anchor for type II membrane protein" evidence="3">
    <location>
        <begin position="30"/>
        <end position="46"/>
    </location>
</feature>
<feature type="topological domain" description="Extracellular" evidence="3">
    <location>
        <begin position="47"/>
        <end position="581"/>
    </location>
</feature>
<feature type="active site" evidence="1">
    <location>
        <position position="172"/>
    </location>
</feature>
<feature type="active site" description="Proton acceptor" evidence="1">
    <location>
        <position position="241"/>
    </location>
</feature>
<feature type="binding site" evidence="1">
    <location>
        <position position="170"/>
    </location>
    <ligand>
        <name>Zn(2+)</name>
        <dbReference type="ChEBI" id="CHEBI:29105"/>
        <label>2</label>
    </ligand>
</feature>
<feature type="binding site" evidence="1">
    <location>
        <position position="207"/>
    </location>
    <ligand>
        <name>Zn(2+)</name>
        <dbReference type="ChEBI" id="CHEBI:29105"/>
        <label>1</label>
    </ligand>
</feature>
<feature type="binding site" evidence="1">
    <location>
        <position position="207"/>
    </location>
    <ligand>
        <name>Zn(2+)</name>
        <dbReference type="ChEBI" id="CHEBI:29105"/>
        <label>2</label>
    </ligand>
</feature>
<feature type="binding site" evidence="1">
    <location>
        <position position="242"/>
    </location>
    <ligand>
        <name>Zn(2+)</name>
        <dbReference type="ChEBI" id="CHEBI:29105"/>
        <label>1</label>
    </ligand>
</feature>
<feature type="binding site" evidence="1">
    <location>
        <position position="270"/>
    </location>
    <ligand>
        <name>Zn(2+)</name>
        <dbReference type="ChEBI" id="CHEBI:29105"/>
        <label>2</label>
    </ligand>
</feature>
<feature type="binding site" evidence="1">
    <location>
        <position position="550"/>
    </location>
    <ligand>
        <name>Zn(2+)</name>
        <dbReference type="ChEBI" id="CHEBI:29105"/>
        <label>1</label>
    </ligand>
</feature>
<feature type="glycosylation site" description="N-linked (GlcNAc...) asparagine" evidence="3">
    <location>
        <position position="54"/>
    </location>
</feature>
<feature type="glycosylation site" description="N-linked (GlcNAc...) asparagine" evidence="3">
    <location>
        <position position="76"/>
    </location>
</feature>
<feature type="glycosylation site" description="N-linked (GlcNAc...) asparagine" evidence="3">
    <location>
        <position position="335"/>
    </location>
</feature>
<feature type="glycosylation site" description="N-linked (GlcNAc...) asparagine" evidence="3">
    <location>
        <position position="428"/>
    </location>
</feature>
<feature type="cross-link" description="Glycyl lysine isopeptide (Lys-Gly) (interchain with G-Cter in ubiquitin)" evidence="2">
    <location>
        <position position="17"/>
    </location>
</feature>